<evidence type="ECO:0000255" key="1">
    <source>
        <dbReference type="HAMAP-Rule" id="MF_00127"/>
    </source>
</evidence>
<evidence type="ECO:0000305" key="2"/>
<evidence type="ECO:0000312" key="3">
    <source>
        <dbReference type="EMBL" id="QXJ30291.1"/>
    </source>
</evidence>
<keyword id="KW-0030">Aminoacyl-tRNA synthetase</keyword>
<keyword id="KW-0067">ATP-binding</keyword>
<keyword id="KW-0963">Cytoplasm</keyword>
<keyword id="KW-0436">Ligase</keyword>
<keyword id="KW-0547">Nucleotide-binding</keyword>
<keyword id="KW-0648">Protein biosynthesis</keyword>
<gene>
    <name evidence="1" type="primary">hisS</name>
    <name evidence="3" type="ORF">J5U23_03189</name>
</gene>
<reference evidence="3" key="1">
    <citation type="journal article" date="2021" name="Environ. Microbiol.">
        <title>New insights into the diversity and evolution of the archaeal mobilome from three complete genomes of Saccharolobus shibatae.</title>
        <authorList>
            <person name="Medvedeva S."/>
            <person name="Brandt D."/>
            <person name="Cvirkaite-Krupovic V."/>
            <person name="Liu Y."/>
            <person name="Severinov K."/>
            <person name="Ishino S."/>
            <person name="Ishino Y."/>
            <person name="Prangishvili D."/>
            <person name="Kalinowski J."/>
            <person name="Krupovic M."/>
        </authorList>
    </citation>
    <scope>NUCLEOTIDE SEQUENCE [LARGE SCALE GENOMIC DNA]</scope>
    <source>
        <strain>ATCC 51178 / DSM 5389 / JCM 8931 / NBRC 15437 / B12</strain>
    </source>
</reference>
<reference key="2">
    <citation type="submission" date="1994-10" db="EMBL/GenBank/DDBJ databases">
        <authorList>
            <person name="Osipiuk J."/>
            <person name="Trent J.D."/>
        </authorList>
    </citation>
    <scope>NUCLEOTIDE SEQUENCE [GENOMIC DNA] OF 1-138</scope>
    <source>
        <strain>ATCC 51178 / DSM 5389 / JCM 8931 / NBRC 15437 / B12</strain>
    </source>
</reference>
<name>SYH_SACSH</name>
<dbReference type="EC" id="6.1.1.21" evidence="1"/>
<dbReference type="EMBL" id="CP077717">
    <property type="protein sequence ID" value="QXJ30291.1"/>
    <property type="molecule type" value="Genomic_DNA"/>
</dbReference>
<dbReference type="EMBL" id="L36863">
    <property type="protein sequence ID" value="AAA72452.1"/>
    <property type="molecule type" value="Genomic_DNA"/>
</dbReference>
<dbReference type="RefSeq" id="WP_218258914.1">
    <property type="nucleotide sequence ID" value="NZ_CP077717.1"/>
</dbReference>
<dbReference type="SMR" id="P46220"/>
<dbReference type="GeneID" id="65564667"/>
<dbReference type="KEGG" id="sshi:J5U23_03189"/>
<dbReference type="OrthoDB" id="8659at2157"/>
<dbReference type="Proteomes" id="UP000694018">
    <property type="component" value="Chromosome"/>
</dbReference>
<dbReference type="GO" id="GO:0005737">
    <property type="term" value="C:cytoplasm"/>
    <property type="evidence" value="ECO:0007669"/>
    <property type="project" value="UniProtKB-SubCell"/>
</dbReference>
<dbReference type="GO" id="GO:0005524">
    <property type="term" value="F:ATP binding"/>
    <property type="evidence" value="ECO:0007669"/>
    <property type="project" value="UniProtKB-UniRule"/>
</dbReference>
<dbReference type="GO" id="GO:0004821">
    <property type="term" value="F:histidine-tRNA ligase activity"/>
    <property type="evidence" value="ECO:0007669"/>
    <property type="project" value="UniProtKB-UniRule"/>
</dbReference>
<dbReference type="GO" id="GO:0006427">
    <property type="term" value="P:histidyl-tRNA aminoacylation"/>
    <property type="evidence" value="ECO:0007669"/>
    <property type="project" value="UniProtKB-UniRule"/>
</dbReference>
<dbReference type="GO" id="GO:0000105">
    <property type="term" value="P:L-histidine biosynthetic process"/>
    <property type="evidence" value="ECO:0007669"/>
    <property type="project" value="InterPro"/>
</dbReference>
<dbReference type="CDD" id="cd00773">
    <property type="entry name" value="HisRS-like_core"/>
    <property type="match status" value="1"/>
</dbReference>
<dbReference type="FunFam" id="3.30.930.10:FF:000121">
    <property type="entry name" value="Histidine--tRNA ligase"/>
    <property type="match status" value="1"/>
</dbReference>
<dbReference type="HAMAP" id="MF_00127">
    <property type="entry name" value="His_tRNA_synth"/>
    <property type="match status" value="1"/>
</dbReference>
<dbReference type="HAMAP" id="MF_00125">
    <property type="entry name" value="HisZ"/>
    <property type="match status" value="1"/>
</dbReference>
<dbReference type="InterPro" id="IPR006195">
    <property type="entry name" value="aa-tRNA-synth_II"/>
</dbReference>
<dbReference type="InterPro" id="IPR004154">
    <property type="entry name" value="Anticodon-bd"/>
</dbReference>
<dbReference type="InterPro" id="IPR015807">
    <property type="entry name" value="His-tRNA-ligase"/>
</dbReference>
<dbReference type="InterPro" id="IPR041715">
    <property type="entry name" value="HisRS-like_core"/>
</dbReference>
<dbReference type="InterPro" id="IPR004516">
    <property type="entry name" value="HisRS/HisZ"/>
</dbReference>
<dbReference type="InterPro" id="IPR004517">
    <property type="entry name" value="HisZ"/>
</dbReference>
<dbReference type="NCBIfam" id="TIGR00442">
    <property type="entry name" value="hisS"/>
    <property type="match status" value="1"/>
</dbReference>
<dbReference type="PANTHER" id="PTHR43707:SF1">
    <property type="entry name" value="HISTIDINE--TRNA LIGASE, MITOCHONDRIAL-RELATED"/>
    <property type="match status" value="1"/>
</dbReference>
<dbReference type="PANTHER" id="PTHR43707">
    <property type="entry name" value="HISTIDYL-TRNA SYNTHETASE"/>
    <property type="match status" value="1"/>
</dbReference>
<dbReference type="Pfam" id="PF03129">
    <property type="entry name" value="HGTP_anticodon"/>
    <property type="match status" value="1"/>
</dbReference>
<dbReference type="Pfam" id="PF13393">
    <property type="entry name" value="tRNA-synt_His"/>
    <property type="match status" value="1"/>
</dbReference>
<dbReference type="PROSITE" id="PS50862">
    <property type="entry name" value="AA_TRNA_LIGASE_II"/>
    <property type="match status" value="1"/>
</dbReference>
<feature type="chain" id="PRO_0000136325" description="Histidine--tRNA ligase">
    <location>
        <begin position="1"/>
        <end position="426"/>
    </location>
</feature>
<feature type="sequence conflict" description="In Ref. 2; AAA72452." evidence="2" ref="2">
    <original>A</original>
    <variation>D</variation>
    <location>
        <position position="136"/>
    </location>
</feature>
<comment type="catalytic activity">
    <reaction evidence="1">
        <text>tRNA(His) + L-histidine + ATP = L-histidyl-tRNA(His) + AMP + diphosphate + H(+)</text>
        <dbReference type="Rhea" id="RHEA:17313"/>
        <dbReference type="Rhea" id="RHEA-COMP:9665"/>
        <dbReference type="Rhea" id="RHEA-COMP:9689"/>
        <dbReference type="ChEBI" id="CHEBI:15378"/>
        <dbReference type="ChEBI" id="CHEBI:30616"/>
        <dbReference type="ChEBI" id="CHEBI:33019"/>
        <dbReference type="ChEBI" id="CHEBI:57595"/>
        <dbReference type="ChEBI" id="CHEBI:78442"/>
        <dbReference type="ChEBI" id="CHEBI:78527"/>
        <dbReference type="ChEBI" id="CHEBI:456215"/>
        <dbReference type="EC" id="6.1.1.21"/>
    </reaction>
</comment>
<comment type="subcellular location">
    <subcellularLocation>
        <location evidence="1">Cytoplasm</location>
    </subcellularLocation>
</comment>
<comment type="similarity">
    <text evidence="1">Belongs to the class-II aminoacyl-tRNA synthetase family.</text>
</comment>
<organism>
    <name type="scientific">Saccharolobus shibatae (strain ATCC 51178 / DSM 5389 / JCM 8931 / NBRC 15437 / B12)</name>
    <name type="common">Sulfolobus shibatae</name>
    <dbReference type="NCBI Taxonomy" id="523848"/>
    <lineage>
        <taxon>Archaea</taxon>
        <taxon>Thermoproteota</taxon>
        <taxon>Thermoprotei</taxon>
        <taxon>Sulfolobales</taxon>
        <taxon>Sulfolobaceae</taxon>
        <taxon>Saccharolobus</taxon>
    </lineage>
</organism>
<accession>P46220</accession>
<accession>A0A8F5BRT0</accession>
<protein>
    <recommendedName>
        <fullName evidence="1">Histidine--tRNA ligase</fullName>
        <ecNumber evidence="1">6.1.1.21</ecNumber>
    </recommendedName>
    <alternativeName>
        <fullName evidence="1">Histidyl-tRNA synthetase</fullName>
        <shortName evidence="1">HisRS</shortName>
    </alternativeName>
</protein>
<proteinExistence type="inferred from homology"/>
<sequence length="426" mass="49222">MTKFETVRGMKDYIGIDAEKIRYLESIFRDLAIKYGYSEIITPVVEEFKLFALKGGEELRETMYVFKDKADRELSLRPEITPGVARAYIQNLQSSPKPIRLFYFGTVYRYDEPQYGRYREFRQAGIEMIGDSSILADLEVLDLLYNFYDKLNLSNDITIKINNIGVFRKIMDKYNIEDNLQEHILHLIDKNKINEALDILEKNIKNKDIIDFFNKILTKKDTKLEDIESLAELEEVSRLDIKSEFLYLFRLSRILSNLNIKFKIDLGFVRGLAYYTGLIFEVLHPSVQFSIAGGGRYDKLIELYGGLPSPAIGFAIGVERTLLVIKDLKVEEPVNVIVIGMSEDAIPSMFMVSRILRKEEYKVVINTKDQPLSKLLPYYASQGFKLAIIIGKQELEKNMITVRNLITRKQISVPLENVEDAIKQTL</sequence>